<gene>
    <name type="ordered locus">Jann_0438</name>
</gene>
<proteinExistence type="inferred from homology"/>
<protein>
    <recommendedName>
        <fullName evidence="1">Putative pterin-4-alpha-carbinolamine dehydratase</fullName>
        <shortName evidence="1">PHS</shortName>
        <ecNumber evidence="1">4.2.1.96</ecNumber>
    </recommendedName>
    <alternativeName>
        <fullName evidence="1">4-alpha-hydroxy-tetrahydropterin dehydratase</fullName>
    </alternativeName>
    <alternativeName>
        <fullName evidence="1">Pterin carbinolamine dehydratase</fullName>
        <shortName evidence="1">PCD</shortName>
    </alternativeName>
</protein>
<evidence type="ECO:0000255" key="1">
    <source>
        <dbReference type="HAMAP-Rule" id="MF_00434"/>
    </source>
</evidence>
<reference key="1">
    <citation type="submission" date="2006-02" db="EMBL/GenBank/DDBJ databases">
        <title>Complete sequence of chromosome of Jannaschia sp. CCS1.</title>
        <authorList>
            <consortium name="US DOE Joint Genome Institute"/>
            <person name="Copeland A."/>
            <person name="Lucas S."/>
            <person name="Lapidus A."/>
            <person name="Barry K."/>
            <person name="Detter J.C."/>
            <person name="Glavina del Rio T."/>
            <person name="Hammon N."/>
            <person name="Israni S."/>
            <person name="Pitluck S."/>
            <person name="Brettin T."/>
            <person name="Bruce D."/>
            <person name="Han C."/>
            <person name="Tapia R."/>
            <person name="Gilna P."/>
            <person name="Chertkov O."/>
            <person name="Saunders E."/>
            <person name="Schmutz J."/>
            <person name="Larimer F."/>
            <person name="Land M."/>
            <person name="Kyrpides N."/>
            <person name="Lykidis A."/>
            <person name="Moran M.A."/>
            <person name="Belas R."/>
            <person name="Ye W."/>
            <person name="Buchan A."/>
            <person name="Gonzalez J.M."/>
            <person name="Schell M.A."/>
            <person name="Richardson P."/>
        </authorList>
    </citation>
    <scope>NUCLEOTIDE SEQUENCE [LARGE SCALE GENOMIC DNA]</scope>
    <source>
        <strain>CCS1</strain>
    </source>
</reference>
<comment type="catalytic activity">
    <reaction evidence="1">
        <text>(4aS,6R)-4a-hydroxy-L-erythro-5,6,7,8-tetrahydrobiopterin = (6R)-L-erythro-6,7-dihydrobiopterin + H2O</text>
        <dbReference type="Rhea" id="RHEA:11920"/>
        <dbReference type="ChEBI" id="CHEBI:15377"/>
        <dbReference type="ChEBI" id="CHEBI:15642"/>
        <dbReference type="ChEBI" id="CHEBI:43120"/>
        <dbReference type="EC" id="4.2.1.96"/>
    </reaction>
</comment>
<comment type="similarity">
    <text evidence="1">Belongs to the pterin-4-alpha-carbinolamine dehydratase family.</text>
</comment>
<feature type="chain" id="PRO_1000050416" description="Putative pterin-4-alpha-carbinolamine dehydratase">
    <location>
        <begin position="1"/>
        <end position="98"/>
    </location>
</feature>
<dbReference type="EC" id="4.2.1.96" evidence="1"/>
<dbReference type="EMBL" id="CP000264">
    <property type="protein sequence ID" value="ABD53355.1"/>
    <property type="molecule type" value="Genomic_DNA"/>
</dbReference>
<dbReference type="RefSeq" id="WP_011453564.1">
    <property type="nucleotide sequence ID" value="NC_007802.1"/>
</dbReference>
<dbReference type="SMR" id="Q28VA7"/>
<dbReference type="STRING" id="290400.Jann_0438"/>
<dbReference type="KEGG" id="jan:Jann_0438"/>
<dbReference type="eggNOG" id="COG2154">
    <property type="taxonomic scope" value="Bacteria"/>
</dbReference>
<dbReference type="HOGENOM" id="CLU_081974_3_2_5"/>
<dbReference type="OrthoDB" id="9794987at2"/>
<dbReference type="Proteomes" id="UP000008326">
    <property type="component" value="Chromosome"/>
</dbReference>
<dbReference type="GO" id="GO:0008124">
    <property type="term" value="F:4-alpha-hydroxytetrahydrobiopterin dehydratase activity"/>
    <property type="evidence" value="ECO:0007669"/>
    <property type="project" value="UniProtKB-UniRule"/>
</dbReference>
<dbReference type="GO" id="GO:0006729">
    <property type="term" value="P:tetrahydrobiopterin biosynthetic process"/>
    <property type="evidence" value="ECO:0007669"/>
    <property type="project" value="InterPro"/>
</dbReference>
<dbReference type="CDD" id="cd00914">
    <property type="entry name" value="PCD_DCoH_subfamily_b"/>
    <property type="match status" value="1"/>
</dbReference>
<dbReference type="Gene3D" id="3.30.1360.20">
    <property type="entry name" value="Transcriptional coactivator/pterin dehydratase"/>
    <property type="match status" value="1"/>
</dbReference>
<dbReference type="HAMAP" id="MF_00434">
    <property type="entry name" value="Pterin_4_alpha"/>
    <property type="match status" value="1"/>
</dbReference>
<dbReference type="InterPro" id="IPR036428">
    <property type="entry name" value="PCD_sf"/>
</dbReference>
<dbReference type="InterPro" id="IPR001533">
    <property type="entry name" value="Pterin_deHydtase"/>
</dbReference>
<dbReference type="NCBIfam" id="NF002018">
    <property type="entry name" value="PRK00823.1-3"/>
    <property type="match status" value="1"/>
</dbReference>
<dbReference type="PANTHER" id="PTHR12599">
    <property type="entry name" value="PTERIN-4-ALPHA-CARBINOLAMINE DEHYDRATASE"/>
    <property type="match status" value="1"/>
</dbReference>
<dbReference type="PANTHER" id="PTHR12599:SF0">
    <property type="entry name" value="PTERIN-4-ALPHA-CARBINOLAMINE DEHYDRATASE"/>
    <property type="match status" value="1"/>
</dbReference>
<dbReference type="Pfam" id="PF01329">
    <property type="entry name" value="Pterin_4a"/>
    <property type="match status" value="1"/>
</dbReference>
<dbReference type="SUPFAM" id="SSF55248">
    <property type="entry name" value="PCD-like"/>
    <property type="match status" value="1"/>
</dbReference>
<name>PHS_JANSC</name>
<sequence>MAEKLDDAARAKAVASLADSGWEDVQGRDAIHKTFVFKNFTRAFGWMTQVAIVAEKMDHHPEWSNVYKTVEVTLATHDVGGLSELDVTLAQKMDRLAQ</sequence>
<organism>
    <name type="scientific">Jannaschia sp. (strain CCS1)</name>
    <dbReference type="NCBI Taxonomy" id="290400"/>
    <lineage>
        <taxon>Bacteria</taxon>
        <taxon>Pseudomonadati</taxon>
        <taxon>Pseudomonadota</taxon>
        <taxon>Alphaproteobacteria</taxon>
        <taxon>Rhodobacterales</taxon>
        <taxon>Roseobacteraceae</taxon>
        <taxon>Jannaschia</taxon>
    </lineage>
</organism>
<accession>Q28VA7</accession>
<keyword id="KW-0456">Lyase</keyword>
<keyword id="KW-1185">Reference proteome</keyword>